<name>RDRP_CPMV1</name>
<sequence>MAMIIHDPVYKLWYAXRAKSNLPGLAPHKTESITTVLSLTNVKNKQATNSILLNKITDLVLGLKAFSIKSKGVRTTLRVNKHWITPKEFPRFVKLVVWCTRTQEHEDSFMKIIGKCDHIWQTAGPNFLFKYLKEVMRLSVRRIANIELEPSKKIFVKLNKFRFPNIIPLPICDQIIRDQNDQVLWASKRLIICLLTILSVHRVLPTKVVPDYSTIVDPFTGVSKTIDQKLLRKAIHLLNIKRVKQLKLKITGSMKAGPNGKISLLTSSVDALSFITQPTKIFTYLDFSVRVYKFRGLLLWMWMMCILLITLPYAIVSFMLGALIPIMGKLSVVYDQAGKARIVAITNSWIQTAFYSLHLHVFKLLKNIDQDGTFDQERPFKLLIKWLNEPTQKFYGFDLTAATDRLPIDLQVDILNIIFKNSPGSSWRSLLRIKYKSPQGFLTYAVGQPMGAYSSFAMLALTHHVIVQVAALNSGFTTRFTDYCILGDDIVIAHDTVASEYLKLMETLGLSISSGKSVISSEFTEFAKKLKGRNNFDIFYRSWFSIIHFEKQILHLCTVFELLRRGVCELYDLYPQYINKLPKIYLRYNLLIDWVVVAFTNQILIGDRPRADGIRLFDYFVGLEVIPPLLRIMLHTIKKDWNGLWNSIKYTLNKGFVVSQVRVGLPDWTELFLLPILPSTYIIIRDYCRSFNDLTKLFGEWWLLRFESESYQVSILDVIDRLAHTSIPNLDIHDKKKVKLTLDNLYKLSLIVNIPSGGARRYIEFLRFNGLKSPLIVERYIKDGIRIEKPLTLQGLHRSGDIQLGFKIS</sequence>
<accession>Q33339</accession>
<organism>
    <name type="scientific">Cryphonectria parasitica mitovirus 1 (strain American chestnut tree/New Jersey/NB631)</name>
    <name type="common">CMV1</name>
    <name type="synonym">Cryphonectria mitovirus 1</name>
    <dbReference type="NCBI Taxonomy" id="186769"/>
    <lineage>
        <taxon>Viruses</taxon>
        <taxon>Riboviria</taxon>
        <taxon>Orthornavirae</taxon>
        <taxon>Lenarviricota</taxon>
        <taxon>Howeltoviricetes</taxon>
        <taxon>Cryppavirales</taxon>
        <taxon>Mitoviridae</taxon>
        <taxon>Duamitovirus</taxon>
        <taxon>Duamitovirus crpa1</taxon>
    </lineage>
</organism>
<organismHost>
    <name type="scientific">Cryphonectria parasitica</name>
    <name type="common">Chestnut blight fungus</name>
    <name type="synonym">Endothia parasitica</name>
    <dbReference type="NCBI Taxonomy" id="5116"/>
</organismHost>
<reference key="1">
    <citation type="journal article" date="1994" name="Proc. Natl. Acad. Sci. U.S.A.">
        <title>A small mitochondrial double-stranded (ds) RNA element associated with a hypovirulent strain of the chestnut blight fungus and ancestrally related to yeast cytoplasmic T and W dsRNAs.</title>
        <authorList>
            <person name="Polashock J.J."/>
            <person name="Hillman B.I."/>
        </authorList>
    </citation>
    <scope>NUCLEOTIDE SEQUENCE [GENOMIC RNA]</scope>
</reference>
<proteinExistence type="inferred from homology"/>
<protein>
    <recommendedName>
        <fullName>RNA-directed RNA polymerase</fullName>
        <ecNumber>2.7.7.48</ecNumber>
    </recommendedName>
    <alternativeName>
        <fullName>p93</fullName>
    </alternativeName>
</protein>
<keyword id="KW-1045">Host mitochondrion</keyword>
<keyword id="KW-0548">Nucleotidyltransferase</keyword>
<keyword id="KW-1185">Reference proteome</keyword>
<keyword id="KW-0687">Ribonucleoprotein</keyword>
<keyword id="KW-0694">RNA-binding</keyword>
<keyword id="KW-0696">RNA-directed RNA polymerase</keyword>
<keyword id="KW-0808">Transferase</keyword>
<keyword id="KW-0693">Viral RNA replication</keyword>
<dbReference type="EC" id="2.7.7.48"/>
<dbReference type="EMBL" id="L31849">
    <property type="protein sequence ID" value="AAA61703.1"/>
    <property type="molecule type" value="Genomic_RNA"/>
</dbReference>
<dbReference type="RefSeq" id="NP_660174.1">
    <property type="nucleotide sequence ID" value="NC_004046.1"/>
</dbReference>
<dbReference type="GeneID" id="949211"/>
<dbReference type="KEGG" id="vg:949211"/>
<dbReference type="OrthoDB" id="14837at10239"/>
<dbReference type="Proteomes" id="UP000001105">
    <property type="component" value="Genome"/>
</dbReference>
<dbReference type="GO" id="GO:0033650">
    <property type="term" value="C:host cell mitochondrion"/>
    <property type="evidence" value="ECO:0007669"/>
    <property type="project" value="UniProtKB-SubCell"/>
</dbReference>
<dbReference type="GO" id="GO:1990904">
    <property type="term" value="C:ribonucleoprotein complex"/>
    <property type="evidence" value="ECO:0007669"/>
    <property type="project" value="UniProtKB-KW"/>
</dbReference>
<dbReference type="GO" id="GO:0003723">
    <property type="term" value="F:RNA binding"/>
    <property type="evidence" value="ECO:0007669"/>
    <property type="project" value="UniProtKB-KW"/>
</dbReference>
<dbReference type="GO" id="GO:0003968">
    <property type="term" value="F:RNA-directed RNA polymerase activity"/>
    <property type="evidence" value="ECO:0007669"/>
    <property type="project" value="UniProtKB-KW"/>
</dbReference>
<dbReference type="InterPro" id="IPR043502">
    <property type="entry name" value="DNA/RNA_pol_sf"/>
</dbReference>
<dbReference type="InterPro" id="IPR008686">
    <property type="entry name" value="RNA_pol_mitovir"/>
</dbReference>
<dbReference type="PANTHER" id="PTHR34456">
    <property type="entry name" value="MITOVIRUS RNA-DEPENDENT RNA POLYMERASE"/>
    <property type="match status" value="1"/>
</dbReference>
<dbReference type="PANTHER" id="PTHR34456:SF13">
    <property type="entry name" value="REVERSE TRANSCRIPTASE DOMAIN-CONTAINING PROTEIN"/>
    <property type="match status" value="1"/>
</dbReference>
<dbReference type="Pfam" id="PF05919">
    <property type="entry name" value="Mitovir_RNA_pol"/>
    <property type="match status" value="1"/>
</dbReference>
<dbReference type="SUPFAM" id="SSF56672">
    <property type="entry name" value="DNA/RNA polymerases"/>
    <property type="match status" value="1"/>
</dbReference>
<feature type="chain" id="PRO_0000409223" description="RNA-directed RNA polymerase">
    <location>
        <begin position="1"/>
        <end position="809"/>
    </location>
</feature>
<evidence type="ECO:0000250" key="1"/>
<comment type="function">
    <text evidence="1">RNA-directed RNA polymerase that replicates the viral (+) and (-) genome.</text>
</comment>
<comment type="catalytic activity">
    <reaction>
        <text>RNA(n) + a ribonucleoside 5'-triphosphate = RNA(n+1) + diphosphate</text>
        <dbReference type="Rhea" id="RHEA:21248"/>
        <dbReference type="Rhea" id="RHEA-COMP:14527"/>
        <dbReference type="Rhea" id="RHEA-COMP:17342"/>
        <dbReference type="ChEBI" id="CHEBI:33019"/>
        <dbReference type="ChEBI" id="CHEBI:61557"/>
        <dbReference type="ChEBI" id="CHEBI:140395"/>
        <dbReference type="EC" id="2.7.7.48"/>
    </reaction>
</comment>
<comment type="subunit">
    <text>Forms a ribonucleoprotein complex with the viral RNA. Since the viral RNA is not encapsidated, ribonucleoprotein complex formation appears to be the strategy to survive in the host as persistent virus.</text>
</comment>
<comment type="subcellular location">
    <subcellularLocation>
        <location>Host mitochondrion</location>
    </subcellularLocation>
    <text>The virus probably exists as a ribonucleoprotein viral particle and is transmitted via maternal inheritance through ascospores with a high rate of transmission through conidia.</text>
</comment>